<dbReference type="EC" id="2.7.1.71" evidence="1"/>
<dbReference type="EMBL" id="CP000644">
    <property type="protein sequence ID" value="ABO89246.1"/>
    <property type="molecule type" value="Genomic_DNA"/>
</dbReference>
<dbReference type="RefSeq" id="WP_005317117.1">
    <property type="nucleotide sequence ID" value="NC_009348.1"/>
</dbReference>
<dbReference type="SMR" id="A4SK24"/>
<dbReference type="STRING" id="29491.GCA_000820065_02101"/>
<dbReference type="GeneID" id="79878772"/>
<dbReference type="KEGG" id="asa:ASA_1125"/>
<dbReference type="eggNOG" id="COG0703">
    <property type="taxonomic scope" value="Bacteria"/>
</dbReference>
<dbReference type="HOGENOM" id="CLU_057607_2_2_6"/>
<dbReference type="UniPathway" id="UPA00053">
    <property type="reaction ID" value="UER00088"/>
</dbReference>
<dbReference type="Proteomes" id="UP000000225">
    <property type="component" value="Chromosome"/>
</dbReference>
<dbReference type="GO" id="GO:0005829">
    <property type="term" value="C:cytosol"/>
    <property type="evidence" value="ECO:0007669"/>
    <property type="project" value="TreeGrafter"/>
</dbReference>
<dbReference type="GO" id="GO:0005524">
    <property type="term" value="F:ATP binding"/>
    <property type="evidence" value="ECO:0007669"/>
    <property type="project" value="UniProtKB-UniRule"/>
</dbReference>
<dbReference type="GO" id="GO:0000287">
    <property type="term" value="F:magnesium ion binding"/>
    <property type="evidence" value="ECO:0007669"/>
    <property type="project" value="UniProtKB-UniRule"/>
</dbReference>
<dbReference type="GO" id="GO:0004765">
    <property type="term" value="F:shikimate kinase activity"/>
    <property type="evidence" value="ECO:0007669"/>
    <property type="project" value="UniProtKB-UniRule"/>
</dbReference>
<dbReference type="GO" id="GO:0008652">
    <property type="term" value="P:amino acid biosynthetic process"/>
    <property type="evidence" value="ECO:0007669"/>
    <property type="project" value="UniProtKB-KW"/>
</dbReference>
<dbReference type="GO" id="GO:0009073">
    <property type="term" value="P:aromatic amino acid family biosynthetic process"/>
    <property type="evidence" value="ECO:0007669"/>
    <property type="project" value="UniProtKB-KW"/>
</dbReference>
<dbReference type="GO" id="GO:0009423">
    <property type="term" value="P:chorismate biosynthetic process"/>
    <property type="evidence" value="ECO:0007669"/>
    <property type="project" value="UniProtKB-UniRule"/>
</dbReference>
<dbReference type="CDD" id="cd00464">
    <property type="entry name" value="SK"/>
    <property type="match status" value="1"/>
</dbReference>
<dbReference type="FunFam" id="3.40.50.300:FF:000099">
    <property type="entry name" value="Shikimate kinase 1"/>
    <property type="match status" value="1"/>
</dbReference>
<dbReference type="Gene3D" id="3.40.50.300">
    <property type="entry name" value="P-loop containing nucleotide triphosphate hydrolases"/>
    <property type="match status" value="1"/>
</dbReference>
<dbReference type="HAMAP" id="MF_00109">
    <property type="entry name" value="Shikimate_kinase"/>
    <property type="match status" value="1"/>
</dbReference>
<dbReference type="InterPro" id="IPR027417">
    <property type="entry name" value="P-loop_NTPase"/>
</dbReference>
<dbReference type="InterPro" id="IPR031322">
    <property type="entry name" value="Shikimate/glucono_kinase"/>
</dbReference>
<dbReference type="InterPro" id="IPR000623">
    <property type="entry name" value="Shikimate_kinase/TSH1"/>
</dbReference>
<dbReference type="InterPro" id="IPR023000">
    <property type="entry name" value="Shikimate_kinase_CS"/>
</dbReference>
<dbReference type="NCBIfam" id="NF003456">
    <property type="entry name" value="PRK05057.1"/>
    <property type="match status" value="1"/>
</dbReference>
<dbReference type="PANTHER" id="PTHR21087">
    <property type="entry name" value="SHIKIMATE KINASE"/>
    <property type="match status" value="1"/>
</dbReference>
<dbReference type="PANTHER" id="PTHR21087:SF16">
    <property type="entry name" value="SHIKIMATE KINASE 1, CHLOROPLASTIC"/>
    <property type="match status" value="1"/>
</dbReference>
<dbReference type="Pfam" id="PF01202">
    <property type="entry name" value="SKI"/>
    <property type="match status" value="1"/>
</dbReference>
<dbReference type="PRINTS" id="PR01100">
    <property type="entry name" value="SHIKIMTKNASE"/>
</dbReference>
<dbReference type="SUPFAM" id="SSF52540">
    <property type="entry name" value="P-loop containing nucleoside triphosphate hydrolases"/>
    <property type="match status" value="1"/>
</dbReference>
<dbReference type="PROSITE" id="PS01128">
    <property type="entry name" value="SHIKIMATE_KINASE"/>
    <property type="match status" value="1"/>
</dbReference>
<organism>
    <name type="scientific">Aeromonas salmonicida (strain A449)</name>
    <dbReference type="NCBI Taxonomy" id="382245"/>
    <lineage>
        <taxon>Bacteria</taxon>
        <taxon>Pseudomonadati</taxon>
        <taxon>Pseudomonadota</taxon>
        <taxon>Gammaproteobacteria</taxon>
        <taxon>Aeromonadales</taxon>
        <taxon>Aeromonadaceae</taxon>
        <taxon>Aeromonas</taxon>
    </lineage>
</organism>
<evidence type="ECO:0000255" key="1">
    <source>
        <dbReference type="HAMAP-Rule" id="MF_00109"/>
    </source>
</evidence>
<gene>
    <name evidence="1" type="primary">aroK</name>
    <name type="ordered locus">ASA_1125</name>
</gene>
<protein>
    <recommendedName>
        <fullName evidence="1">Shikimate kinase</fullName>
        <shortName evidence="1">SK</shortName>
        <ecNumber evidence="1">2.7.1.71</ecNumber>
    </recommendedName>
</protein>
<feature type="chain" id="PRO_1000022964" description="Shikimate kinase">
    <location>
        <begin position="1"/>
        <end position="172"/>
    </location>
</feature>
<feature type="binding site" evidence="1">
    <location>
        <begin position="14"/>
        <end position="19"/>
    </location>
    <ligand>
        <name>ATP</name>
        <dbReference type="ChEBI" id="CHEBI:30616"/>
    </ligand>
</feature>
<feature type="binding site" evidence="1">
    <location>
        <position position="18"/>
    </location>
    <ligand>
        <name>Mg(2+)</name>
        <dbReference type="ChEBI" id="CHEBI:18420"/>
    </ligand>
</feature>
<feature type="binding site" evidence="1">
    <location>
        <position position="36"/>
    </location>
    <ligand>
        <name>substrate</name>
    </ligand>
</feature>
<feature type="binding site" evidence="1">
    <location>
        <position position="60"/>
    </location>
    <ligand>
        <name>substrate</name>
    </ligand>
</feature>
<feature type="binding site" evidence="1">
    <location>
        <position position="82"/>
    </location>
    <ligand>
        <name>substrate</name>
    </ligand>
</feature>
<feature type="binding site" evidence="1">
    <location>
        <position position="120"/>
    </location>
    <ligand>
        <name>ATP</name>
        <dbReference type="ChEBI" id="CHEBI:30616"/>
    </ligand>
</feature>
<feature type="binding site" evidence="1">
    <location>
        <position position="140"/>
    </location>
    <ligand>
        <name>substrate</name>
    </ligand>
</feature>
<feature type="binding site" evidence="1">
    <location>
        <position position="157"/>
    </location>
    <ligand>
        <name>ATP</name>
        <dbReference type="ChEBI" id="CHEBI:30616"/>
    </ligand>
</feature>
<comment type="function">
    <text evidence="1">Catalyzes the specific phosphorylation of the 3-hydroxyl group of shikimic acid using ATP as a cosubstrate.</text>
</comment>
<comment type="catalytic activity">
    <reaction evidence="1">
        <text>shikimate + ATP = 3-phosphoshikimate + ADP + H(+)</text>
        <dbReference type="Rhea" id="RHEA:13121"/>
        <dbReference type="ChEBI" id="CHEBI:15378"/>
        <dbReference type="ChEBI" id="CHEBI:30616"/>
        <dbReference type="ChEBI" id="CHEBI:36208"/>
        <dbReference type="ChEBI" id="CHEBI:145989"/>
        <dbReference type="ChEBI" id="CHEBI:456216"/>
        <dbReference type="EC" id="2.7.1.71"/>
    </reaction>
</comment>
<comment type="cofactor">
    <cofactor evidence="1">
        <name>Mg(2+)</name>
        <dbReference type="ChEBI" id="CHEBI:18420"/>
    </cofactor>
    <text evidence="1">Binds 1 Mg(2+) ion per subunit.</text>
</comment>
<comment type="pathway">
    <text evidence="1">Metabolic intermediate biosynthesis; chorismate biosynthesis; chorismate from D-erythrose 4-phosphate and phosphoenolpyruvate: step 5/7.</text>
</comment>
<comment type="subunit">
    <text evidence="1">Monomer.</text>
</comment>
<comment type="subcellular location">
    <subcellularLocation>
        <location evidence="1">Cytoplasm</location>
    </subcellularLocation>
</comment>
<comment type="similarity">
    <text evidence="1">Belongs to the shikimate kinase family.</text>
</comment>
<name>AROK_AERS4</name>
<keyword id="KW-0028">Amino-acid biosynthesis</keyword>
<keyword id="KW-0057">Aromatic amino acid biosynthesis</keyword>
<keyword id="KW-0067">ATP-binding</keyword>
<keyword id="KW-0963">Cytoplasm</keyword>
<keyword id="KW-0418">Kinase</keyword>
<keyword id="KW-0460">Magnesium</keyword>
<keyword id="KW-0479">Metal-binding</keyword>
<keyword id="KW-0547">Nucleotide-binding</keyword>
<keyword id="KW-0808">Transferase</keyword>
<accession>A4SK24</accession>
<sequence length="172" mass="19446">MAEKRNIFLIGPMGAGKSTIGRHLAEQLHMEFFDSDHEIERRSGADIGWVFDVEGEEGFRIREEKVIGDLSEQQGIVLATGGGAIKSRETRNKLSARGIVVYLETTIEKQLARTQRDKRRPLLQTEEPPREVLERLAQERNALYEEVADFVIQTDDQSAKIVANQIVKLIGM</sequence>
<reference key="1">
    <citation type="journal article" date="2008" name="BMC Genomics">
        <title>The genome of Aeromonas salmonicida subsp. salmonicida A449: insights into the evolution of a fish pathogen.</title>
        <authorList>
            <person name="Reith M.E."/>
            <person name="Singh R.K."/>
            <person name="Curtis B."/>
            <person name="Boyd J.M."/>
            <person name="Bouevitch A."/>
            <person name="Kimball J."/>
            <person name="Munholland J."/>
            <person name="Murphy C."/>
            <person name="Sarty D."/>
            <person name="Williams J."/>
            <person name="Nash J.H."/>
            <person name="Johnson S.C."/>
            <person name="Brown L.L."/>
        </authorList>
    </citation>
    <scope>NUCLEOTIDE SEQUENCE [LARGE SCALE GENOMIC DNA]</scope>
    <source>
        <strain>A449</strain>
    </source>
</reference>
<proteinExistence type="inferred from homology"/>